<name>RBFA_SYNSC</name>
<accession>Q3AH50</accession>
<evidence type="ECO:0000255" key="1">
    <source>
        <dbReference type="HAMAP-Rule" id="MF_00003"/>
    </source>
</evidence>
<evidence type="ECO:0000256" key="2">
    <source>
        <dbReference type="SAM" id="MobiDB-lite"/>
    </source>
</evidence>
<sequence length="140" mass="15629">MAQGRRVERVAALIRKEVSELMINGIRDERVHHGMVSITEVEVSGDLQHCKIFVSVFGEAQERDQVLEGLQAASGFLRGELGRRLQMRRAPEVVFQLDRGLERGTSVLGLLNRLEDERQQRGDIPPGSDQQPGSDEQPTG</sequence>
<organism>
    <name type="scientific">Synechococcus sp. (strain CC9605)</name>
    <dbReference type="NCBI Taxonomy" id="110662"/>
    <lineage>
        <taxon>Bacteria</taxon>
        <taxon>Bacillati</taxon>
        <taxon>Cyanobacteriota</taxon>
        <taxon>Cyanophyceae</taxon>
        <taxon>Synechococcales</taxon>
        <taxon>Synechococcaceae</taxon>
        <taxon>Synechococcus</taxon>
    </lineage>
</organism>
<reference key="1">
    <citation type="submission" date="2005-07" db="EMBL/GenBank/DDBJ databases">
        <title>Complete sequence of Synechococcus sp. CC9605.</title>
        <authorList>
            <consortium name="US DOE Joint Genome Institute"/>
            <person name="Copeland A."/>
            <person name="Lucas S."/>
            <person name="Lapidus A."/>
            <person name="Barry K."/>
            <person name="Detter J.C."/>
            <person name="Glavina T."/>
            <person name="Hammon N."/>
            <person name="Israni S."/>
            <person name="Pitluck S."/>
            <person name="Schmutz J."/>
            <person name="Martinez M."/>
            <person name="Larimer F."/>
            <person name="Land M."/>
            <person name="Kyrpides N."/>
            <person name="Ivanova N."/>
            <person name="Richardson P."/>
        </authorList>
    </citation>
    <scope>NUCLEOTIDE SEQUENCE [LARGE SCALE GENOMIC DNA]</scope>
    <source>
        <strain>CC9605</strain>
    </source>
</reference>
<proteinExistence type="inferred from homology"/>
<keyword id="KW-0963">Cytoplasm</keyword>
<keyword id="KW-0690">Ribosome biogenesis</keyword>
<comment type="function">
    <text evidence="1">One of several proteins that assist in the late maturation steps of the functional core of the 30S ribosomal subunit. Associates with free 30S ribosomal subunits (but not with 30S subunits that are part of 70S ribosomes or polysomes). Required for efficient processing of 16S rRNA. May interact with the 5'-terminal helix region of 16S rRNA.</text>
</comment>
<comment type="subunit">
    <text evidence="1">Monomer. Binds 30S ribosomal subunits, but not 50S ribosomal subunits or 70S ribosomes.</text>
</comment>
<comment type="subcellular location">
    <subcellularLocation>
        <location evidence="1">Cytoplasm</location>
    </subcellularLocation>
</comment>
<comment type="similarity">
    <text evidence="1">Belongs to the RbfA family.</text>
</comment>
<feature type="chain" id="PRO_1000000238" description="Ribosome-binding factor A">
    <location>
        <begin position="1"/>
        <end position="140"/>
    </location>
</feature>
<feature type="region of interest" description="Disordered" evidence="2">
    <location>
        <begin position="115"/>
        <end position="140"/>
    </location>
</feature>
<feature type="compositionally biased region" description="Polar residues" evidence="2">
    <location>
        <begin position="128"/>
        <end position="140"/>
    </location>
</feature>
<gene>
    <name evidence="1" type="primary">rbfA</name>
    <name type="ordered locus">Syncc9605_2350</name>
</gene>
<protein>
    <recommendedName>
        <fullName evidence="1">Ribosome-binding factor A</fullName>
    </recommendedName>
</protein>
<dbReference type="EMBL" id="CP000110">
    <property type="protein sequence ID" value="ABB36082.1"/>
    <property type="molecule type" value="Genomic_DNA"/>
</dbReference>
<dbReference type="RefSeq" id="WP_011365281.1">
    <property type="nucleotide sequence ID" value="NC_007516.1"/>
</dbReference>
<dbReference type="SMR" id="Q3AH50"/>
<dbReference type="STRING" id="110662.Syncc9605_2350"/>
<dbReference type="KEGG" id="syd:Syncc9605_2350"/>
<dbReference type="eggNOG" id="COG0858">
    <property type="taxonomic scope" value="Bacteria"/>
</dbReference>
<dbReference type="HOGENOM" id="CLU_089475_2_1_3"/>
<dbReference type="OrthoDB" id="307788at2"/>
<dbReference type="GO" id="GO:0005829">
    <property type="term" value="C:cytosol"/>
    <property type="evidence" value="ECO:0007669"/>
    <property type="project" value="TreeGrafter"/>
</dbReference>
<dbReference type="GO" id="GO:0043024">
    <property type="term" value="F:ribosomal small subunit binding"/>
    <property type="evidence" value="ECO:0007669"/>
    <property type="project" value="TreeGrafter"/>
</dbReference>
<dbReference type="GO" id="GO:0030490">
    <property type="term" value="P:maturation of SSU-rRNA"/>
    <property type="evidence" value="ECO:0007669"/>
    <property type="project" value="UniProtKB-UniRule"/>
</dbReference>
<dbReference type="Gene3D" id="3.30.300.20">
    <property type="match status" value="1"/>
</dbReference>
<dbReference type="HAMAP" id="MF_00003">
    <property type="entry name" value="RbfA"/>
    <property type="match status" value="1"/>
</dbReference>
<dbReference type="InterPro" id="IPR015946">
    <property type="entry name" value="KH_dom-like_a/b"/>
</dbReference>
<dbReference type="InterPro" id="IPR000238">
    <property type="entry name" value="RbfA"/>
</dbReference>
<dbReference type="InterPro" id="IPR023799">
    <property type="entry name" value="RbfA_dom_sf"/>
</dbReference>
<dbReference type="InterPro" id="IPR020053">
    <property type="entry name" value="Ribosome-bd_factorA_CS"/>
</dbReference>
<dbReference type="NCBIfam" id="TIGR00082">
    <property type="entry name" value="rbfA"/>
    <property type="match status" value="1"/>
</dbReference>
<dbReference type="PANTHER" id="PTHR33515">
    <property type="entry name" value="RIBOSOME-BINDING FACTOR A, CHLOROPLASTIC-RELATED"/>
    <property type="match status" value="1"/>
</dbReference>
<dbReference type="PANTHER" id="PTHR33515:SF1">
    <property type="entry name" value="RIBOSOME-BINDING FACTOR A, CHLOROPLASTIC-RELATED"/>
    <property type="match status" value="1"/>
</dbReference>
<dbReference type="Pfam" id="PF02033">
    <property type="entry name" value="RBFA"/>
    <property type="match status" value="1"/>
</dbReference>
<dbReference type="SUPFAM" id="SSF89919">
    <property type="entry name" value="Ribosome-binding factor A, RbfA"/>
    <property type="match status" value="1"/>
</dbReference>
<dbReference type="PROSITE" id="PS01319">
    <property type="entry name" value="RBFA"/>
    <property type="match status" value="1"/>
</dbReference>